<reference key="1">
    <citation type="journal article" date="2004" name="Nat. Biotechnol.">
        <title>Complete sequence and comparative genome analysis of the dairy bacterium Streptococcus thermophilus.</title>
        <authorList>
            <person name="Bolotin A."/>
            <person name="Quinquis B."/>
            <person name="Renault P."/>
            <person name="Sorokin A."/>
            <person name="Ehrlich S.D."/>
            <person name="Kulakauskas S."/>
            <person name="Lapidus A."/>
            <person name="Goltsman E."/>
            <person name="Mazur M."/>
            <person name="Pusch G.D."/>
            <person name="Fonstein M."/>
            <person name="Overbeek R."/>
            <person name="Kyprides N."/>
            <person name="Purnelle B."/>
            <person name="Prozzi D."/>
            <person name="Ngui K."/>
            <person name="Masuy D."/>
            <person name="Hancy F."/>
            <person name="Burteau S."/>
            <person name="Boutry M."/>
            <person name="Delcour J."/>
            <person name="Goffeau A."/>
            <person name="Hols P."/>
        </authorList>
    </citation>
    <scope>NUCLEOTIDE SEQUENCE [LARGE SCALE GENOMIC DNA]</scope>
    <source>
        <strain>ATCC BAA-250 / LMG 18311</strain>
    </source>
</reference>
<comment type="function">
    <text evidence="1">Enables the recognition and targeting of unfolded and aggregated proteins to the ClpC protease or to other proteins involved in proteolysis.</text>
</comment>
<comment type="subunit">
    <text evidence="1">Homodimer.</text>
</comment>
<comment type="domain">
    <text>The N-terminal domain probably binds unfolded/aggregated proteins; the C-terminal domain interacts with ClpC.</text>
</comment>
<comment type="similarity">
    <text evidence="1">Belongs to the MecA family.</text>
</comment>
<accession>Q5M699</accession>
<name>MECA_STRT2</name>
<evidence type="ECO:0000255" key="1">
    <source>
        <dbReference type="HAMAP-Rule" id="MF_01124"/>
    </source>
</evidence>
<organism>
    <name type="scientific">Streptococcus thermophilus (strain ATCC BAA-250 / LMG 18311)</name>
    <dbReference type="NCBI Taxonomy" id="264199"/>
    <lineage>
        <taxon>Bacteria</taxon>
        <taxon>Bacillati</taxon>
        <taxon>Bacillota</taxon>
        <taxon>Bacilli</taxon>
        <taxon>Lactobacillales</taxon>
        <taxon>Streptococcaceae</taxon>
        <taxon>Streptococcus</taxon>
    </lineage>
</organism>
<gene>
    <name evidence="1" type="primary">mecA</name>
    <name type="ordered locus">stu0162</name>
</gene>
<dbReference type="EMBL" id="CP000023">
    <property type="protein sequence ID" value="AAV59887.1"/>
    <property type="molecule type" value="Genomic_DNA"/>
</dbReference>
<dbReference type="RefSeq" id="WP_011225365.1">
    <property type="nucleotide sequence ID" value="NC_006448.1"/>
</dbReference>
<dbReference type="SMR" id="Q5M699"/>
<dbReference type="STRING" id="264199.stu0162"/>
<dbReference type="GeneID" id="66898106"/>
<dbReference type="KEGG" id="stl:stu0162"/>
<dbReference type="PATRIC" id="fig|264199.4.peg.168"/>
<dbReference type="eggNOG" id="COG4862">
    <property type="taxonomic scope" value="Bacteria"/>
</dbReference>
<dbReference type="HOGENOM" id="CLU_071496_1_0_9"/>
<dbReference type="Proteomes" id="UP000001170">
    <property type="component" value="Chromosome"/>
</dbReference>
<dbReference type="GO" id="GO:0030674">
    <property type="term" value="F:protein-macromolecule adaptor activity"/>
    <property type="evidence" value="ECO:0007669"/>
    <property type="project" value="UniProtKB-UniRule"/>
</dbReference>
<dbReference type="GO" id="GO:0045892">
    <property type="term" value="P:negative regulation of DNA-templated transcription"/>
    <property type="evidence" value="ECO:0000315"/>
    <property type="project" value="CACAO"/>
</dbReference>
<dbReference type="FunFam" id="3.30.70.1950:FF:000003">
    <property type="entry name" value="Adapter protein MecA"/>
    <property type="match status" value="1"/>
</dbReference>
<dbReference type="Gene3D" id="3.30.70.1950">
    <property type="match status" value="1"/>
</dbReference>
<dbReference type="HAMAP" id="MF_01124">
    <property type="entry name" value="MecA"/>
    <property type="match status" value="1"/>
</dbReference>
<dbReference type="InterPro" id="IPR038471">
    <property type="entry name" value="MecA_C_sf"/>
</dbReference>
<dbReference type="InterPro" id="IPR008681">
    <property type="entry name" value="Neg-reg_MecA"/>
</dbReference>
<dbReference type="NCBIfam" id="NF002643">
    <property type="entry name" value="PRK02315.1-4"/>
    <property type="match status" value="1"/>
</dbReference>
<dbReference type="PANTHER" id="PTHR39161">
    <property type="entry name" value="ADAPTER PROTEIN MECA"/>
    <property type="match status" value="1"/>
</dbReference>
<dbReference type="PANTHER" id="PTHR39161:SF1">
    <property type="entry name" value="ADAPTER PROTEIN MECA 1"/>
    <property type="match status" value="1"/>
</dbReference>
<dbReference type="Pfam" id="PF05389">
    <property type="entry name" value="MecA"/>
    <property type="match status" value="1"/>
</dbReference>
<dbReference type="PIRSF" id="PIRSF029008">
    <property type="entry name" value="MecA"/>
    <property type="match status" value="1"/>
</dbReference>
<feature type="chain" id="PRO_1000065354" description="Adapter protein MecA">
    <location>
        <begin position="1"/>
        <end position="249"/>
    </location>
</feature>
<sequence>MEMKQINETTLKIMITMEDLEEHGMELKDFLIPQEKTEEFFYTVMDELDLPDNFKNSGMLSFRVTPRKDRVDVFVTKSDLKEALDFNDLSDMEDYSGLSPEEFLKALEDNFMDKGDIEAHHKLEEHDKTLKEVDETMTEPAKEVAEETIREDYTHYVLAFSDFDQVVTFAQGLKNVSVEGSEFYKLGDVYYMTILLYLADEPDYYANNMYARFLEYANVADRTRPYLQEHATILMEEDALPVLQATKWS</sequence>
<proteinExistence type="inferred from homology"/>
<protein>
    <recommendedName>
        <fullName evidence="1">Adapter protein MecA</fullName>
    </recommendedName>
</protein>
<keyword id="KW-1185">Reference proteome</keyword>